<protein>
    <recommendedName>
        <fullName evidence="1">Deoxyribose-phosphate aldolase</fullName>
        <shortName evidence="1">DERA</shortName>
        <ecNumber evidence="1">4.1.2.4</ecNumber>
    </recommendedName>
    <alternativeName>
        <fullName evidence="1">2-deoxy-D-ribose 5-phosphate aldolase</fullName>
    </alternativeName>
    <alternativeName>
        <fullName evidence="1">Phosphodeoxyriboaldolase</fullName>
        <shortName evidence="1">Deoxyriboaldolase</shortName>
    </alternativeName>
</protein>
<keyword id="KW-0963">Cytoplasm</keyword>
<keyword id="KW-0456">Lyase</keyword>
<keyword id="KW-0704">Schiff base</keyword>
<name>DEOC_SALDC</name>
<evidence type="ECO:0000255" key="1">
    <source>
        <dbReference type="HAMAP-Rule" id="MF_00592"/>
    </source>
</evidence>
<feature type="chain" id="PRO_1000129811" description="Deoxyribose-phosphate aldolase">
    <location>
        <begin position="1"/>
        <end position="259"/>
    </location>
</feature>
<feature type="active site" description="Proton donor/acceptor" evidence="1">
    <location>
        <position position="102"/>
    </location>
</feature>
<feature type="active site" description="Schiff-base intermediate with acetaldehyde" evidence="1">
    <location>
        <position position="167"/>
    </location>
</feature>
<feature type="active site" description="Proton donor/acceptor" evidence="1">
    <location>
        <position position="201"/>
    </location>
</feature>
<comment type="function">
    <text evidence="1">Catalyzes a reversible aldol reaction between acetaldehyde and D-glyceraldehyde 3-phosphate to generate 2-deoxy-D-ribose 5-phosphate.</text>
</comment>
<comment type="catalytic activity">
    <reaction evidence="1">
        <text>2-deoxy-D-ribose 5-phosphate = D-glyceraldehyde 3-phosphate + acetaldehyde</text>
        <dbReference type="Rhea" id="RHEA:12821"/>
        <dbReference type="ChEBI" id="CHEBI:15343"/>
        <dbReference type="ChEBI" id="CHEBI:59776"/>
        <dbReference type="ChEBI" id="CHEBI:62877"/>
        <dbReference type="EC" id="4.1.2.4"/>
    </reaction>
</comment>
<comment type="pathway">
    <text evidence="1">Carbohydrate degradation; 2-deoxy-D-ribose 1-phosphate degradation; D-glyceraldehyde 3-phosphate and acetaldehyde from 2-deoxy-alpha-D-ribose 1-phosphate: step 2/2.</text>
</comment>
<comment type="subcellular location">
    <subcellularLocation>
        <location evidence="1">Cytoplasm</location>
    </subcellularLocation>
</comment>
<comment type="similarity">
    <text evidence="1">Belongs to the DeoC/FbaB aldolase family. DeoC type 2 subfamily.</text>
</comment>
<dbReference type="EC" id="4.1.2.4" evidence="1"/>
<dbReference type="EMBL" id="CP001144">
    <property type="protein sequence ID" value="ACH74592.1"/>
    <property type="molecule type" value="Genomic_DNA"/>
</dbReference>
<dbReference type="RefSeq" id="WP_001519713.1">
    <property type="nucleotide sequence ID" value="NC_011205.1"/>
</dbReference>
<dbReference type="SMR" id="B5FTC5"/>
<dbReference type="KEGG" id="sed:SeD_A4982"/>
<dbReference type="HOGENOM" id="CLU_053595_3_1_6"/>
<dbReference type="UniPathway" id="UPA00002">
    <property type="reaction ID" value="UER00468"/>
</dbReference>
<dbReference type="Proteomes" id="UP000008322">
    <property type="component" value="Chromosome"/>
</dbReference>
<dbReference type="GO" id="GO:0005737">
    <property type="term" value="C:cytoplasm"/>
    <property type="evidence" value="ECO:0007669"/>
    <property type="project" value="UniProtKB-SubCell"/>
</dbReference>
<dbReference type="GO" id="GO:0004139">
    <property type="term" value="F:deoxyribose-phosphate aldolase activity"/>
    <property type="evidence" value="ECO:0007669"/>
    <property type="project" value="UniProtKB-UniRule"/>
</dbReference>
<dbReference type="GO" id="GO:0006018">
    <property type="term" value="P:2-deoxyribose 1-phosphate catabolic process"/>
    <property type="evidence" value="ECO:0007669"/>
    <property type="project" value="UniProtKB-UniRule"/>
</dbReference>
<dbReference type="GO" id="GO:0016052">
    <property type="term" value="P:carbohydrate catabolic process"/>
    <property type="evidence" value="ECO:0007669"/>
    <property type="project" value="TreeGrafter"/>
</dbReference>
<dbReference type="GO" id="GO:0009264">
    <property type="term" value="P:deoxyribonucleotide catabolic process"/>
    <property type="evidence" value="ECO:0007669"/>
    <property type="project" value="InterPro"/>
</dbReference>
<dbReference type="CDD" id="cd00959">
    <property type="entry name" value="DeoC"/>
    <property type="match status" value="1"/>
</dbReference>
<dbReference type="FunFam" id="3.20.20.70:FF:000034">
    <property type="entry name" value="Deoxyribose-phosphate aldolase"/>
    <property type="match status" value="1"/>
</dbReference>
<dbReference type="Gene3D" id="3.20.20.70">
    <property type="entry name" value="Aldolase class I"/>
    <property type="match status" value="1"/>
</dbReference>
<dbReference type="HAMAP" id="MF_00592">
    <property type="entry name" value="DeoC_type2"/>
    <property type="match status" value="1"/>
</dbReference>
<dbReference type="InterPro" id="IPR013785">
    <property type="entry name" value="Aldolase_TIM"/>
</dbReference>
<dbReference type="InterPro" id="IPR011343">
    <property type="entry name" value="DeoC"/>
</dbReference>
<dbReference type="InterPro" id="IPR002915">
    <property type="entry name" value="DeoC/FbaB/LacD_aldolase"/>
</dbReference>
<dbReference type="InterPro" id="IPR023649">
    <property type="entry name" value="DeoC_typeII"/>
</dbReference>
<dbReference type="NCBIfam" id="TIGR00126">
    <property type="entry name" value="deoC"/>
    <property type="match status" value="1"/>
</dbReference>
<dbReference type="PANTHER" id="PTHR10889">
    <property type="entry name" value="DEOXYRIBOSE-PHOSPHATE ALDOLASE"/>
    <property type="match status" value="1"/>
</dbReference>
<dbReference type="PANTHER" id="PTHR10889:SF3">
    <property type="entry name" value="DEOXYRIBOSE-PHOSPHATE ALDOLASE"/>
    <property type="match status" value="1"/>
</dbReference>
<dbReference type="Pfam" id="PF01791">
    <property type="entry name" value="DeoC"/>
    <property type="match status" value="1"/>
</dbReference>
<dbReference type="PIRSF" id="PIRSF001357">
    <property type="entry name" value="DeoC"/>
    <property type="match status" value="1"/>
</dbReference>
<dbReference type="SMART" id="SM01133">
    <property type="entry name" value="DeoC"/>
    <property type="match status" value="1"/>
</dbReference>
<dbReference type="SUPFAM" id="SSF51569">
    <property type="entry name" value="Aldolase"/>
    <property type="match status" value="1"/>
</dbReference>
<reference key="1">
    <citation type="journal article" date="2011" name="J. Bacteriol.">
        <title>Comparative genomics of 28 Salmonella enterica isolates: evidence for CRISPR-mediated adaptive sublineage evolution.</title>
        <authorList>
            <person name="Fricke W.F."/>
            <person name="Mammel M.K."/>
            <person name="McDermott P.F."/>
            <person name="Tartera C."/>
            <person name="White D.G."/>
            <person name="Leclerc J.E."/>
            <person name="Ravel J."/>
            <person name="Cebula T.A."/>
        </authorList>
    </citation>
    <scope>NUCLEOTIDE SEQUENCE [LARGE SCALE GENOMIC DNA]</scope>
    <source>
        <strain>CT_02021853</strain>
    </source>
</reference>
<proteinExistence type="inferred from homology"/>
<sequence>MTDLKASSLRALKLMDLTTLNDDDTNEKVIALCHQAKTPVGNTAAICIYPRFIPIARKTLKEQGTPDIRIATVTNFPHGNDDIDIALAETRAAIAYGADEVDVVFPYRALIAGNEQVGFDLVKACKDACAAANVLLKVIIETGELKEEALIRKASEISIKAGADFIKTSTGKVPVNATPESARIMMEVIRDMGVSKTVGFKPAGGVRTAEDAQKFLAIADELFGADWADSRHYRFGASSLLASLLKALGHGDGKSASSY</sequence>
<organism>
    <name type="scientific">Salmonella dublin (strain CT_02021853)</name>
    <dbReference type="NCBI Taxonomy" id="439851"/>
    <lineage>
        <taxon>Bacteria</taxon>
        <taxon>Pseudomonadati</taxon>
        <taxon>Pseudomonadota</taxon>
        <taxon>Gammaproteobacteria</taxon>
        <taxon>Enterobacterales</taxon>
        <taxon>Enterobacteriaceae</taxon>
        <taxon>Salmonella</taxon>
    </lineage>
</organism>
<accession>B5FTC5</accession>
<gene>
    <name evidence="1" type="primary">deoC</name>
    <name type="ordered locus">SeD_A4982</name>
</gene>